<evidence type="ECO:0000255" key="1">
    <source>
        <dbReference type="HAMAP-Rule" id="MF_00420"/>
    </source>
</evidence>
<sequence length="733" mass="78028">MPIVPEILREVALTEEEYARAVALLGREPNLIELGMIGALWSEHCGYKHSRPLLRKLPTSGPHVVQGPGENAGAVELGDGLVVVLKIESHNHPSAVEPFQGAATGVGGIVRDIFAMGARPIALADSLRFGPLEEPRQQYLFHGVVGGIGWYGNCLGIPTVAGDVFFAPEYRQNPLVNAMCVGIAERSALIRARATGPGNLVVLVGADTGRDGIHGATFASVEDPERSHRGVVQVGNPFLEKLLLEACLEVLETGAVVAMQDLGAAGLTSASAEIAARGGTGIELDVALVPRRETGMTPYEVMLSESQERMLLVVDPEGIDRVLAIFRRWELHAVVIGRVTDDGLLRVLEDGQVVAELPVWLLTDACPTYVREAREAGEIRERRAFDPDALPDLQPAEVAEMLAALLRSPNIASRRPIYRTYDHTILTNTVLPPGAADAAVLRIKGQRFGIALKTDCNPRYCLLDPRLGTMHAVAEAARNVSCVGAEPLAITDCLNFGNPERPEIYYQLVQAIEGMAEACTVLGIPVVSGNVSLYNETEGRSIPPTPVVGIVGRLADVRRCVGMGFRGEGKVFLLGSELATLGGSEFLAQRHGLVAGAPPPLDLELERRVQACVREGIARGIVLAAHDCSEGGLLIALAESCMVGRIGGRFTTESLIAANGRLDRALFGESASRVIVQVAEGAEGALLGLARAHGVPVQELGRTGGDRFVVGELVDQPLSELIELWTTGLVESA</sequence>
<name>PURL_THERP</name>
<reference key="1">
    <citation type="journal article" date="2009" name="PLoS ONE">
        <title>Complete genome sequence of the aerobic CO-oxidizing thermophile Thermomicrobium roseum.</title>
        <authorList>
            <person name="Wu D."/>
            <person name="Raymond J."/>
            <person name="Wu M."/>
            <person name="Chatterji S."/>
            <person name="Ren Q."/>
            <person name="Graham J.E."/>
            <person name="Bryant D.A."/>
            <person name="Robb F."/>
            <person name="Colman A."/>
            <person name="Tallon L.J."/>
            <person name="Badger J.H."/>
            <person name="Madupu R."/>
            <person name="Ward N.L."/>
            <person name="Eisen J.A."/>
        </authorList>
    </citation>
    <scope>NUCLEOTIDE SEQUENCE [LARGE SCALE GENOMIC DNA]</scope>
    <source>
        <strain>ATCC 27502 / DSM 5159 / P-2</strain>
    </source>
</reference>
<gene>
    <name evidence="1" type="primary">purL</name>
    <name type="ordered locus">trd_0749</name>
</gene>
<proteinExistence type="inferred from homology"/>
<feature type="chain" id="PRO_1000134909" description="Phosphoribosylformylglycinamidine synthase subunit PurL">
    <location>
        <begin position="1"/>
        <end position="733"/>
    </location>
</feature>
<feature type="active site" evidence="1">
    <location>
        <position position="44"/>
    </location>
</feature>
<feature type="active site" description="Proton acceptor" evidence="1">
    <location>
        <position position="90"/>
    </location>
</feature>
<feature type="binding site" evidence="1">
    <location>
        <position position="47"/>
    </location>
    <ligand>
        <name>ATP</name>
        <dbReference type="ChEBI" id="CHEBI:30616"/>
    </ligand>
</feature>
<feature type="binding site" evidence="1">
    <location>
        <position position="86"/>
    </location>
    <ligand>
        <name>ATP</name>
        <dbReference type="ChEBI" id="CHEBI:30616"/>
    </ligand>
</feature>
<feature type="binding site" evidence="1">
    <location>
        <position position="88"/>
    </location>
    <ligand>
        <name>Mg(2+)</name>
        <dbReference type="ChEBI" id="CHEBI:18420"/>
        <label>1</label>
    </ligand>
</feature>
<feature type="binding site" evidence="1">
    <location>
        <begin position="89"/>
        <end position="92"/>
    </location>
    <ligand>
        <name>substrate</name>
    </ligand>
</feature>
<feature type="binding site" evidence="1">
    <location>
        <position position="111"/>
    </location>
    <ligand>
        <name>substrate</name>
    </ligand>
</feature>
<feature type="binding site" evidence="1">
    <location>
        <position position="112"/>
    </location>
    <ligand>
        <name>Mg(2+)</name>
        <dbReference type="ChEBI" id="CHEBI:18420"/>
        <label>2</label>
    </ligand>
</feature>
<feature type="binding site" evidence="1">
    <location>
        <position position="233"/>
    </location>
    <ligand>
        <name>substrate</name>
    </ligand>
</feature>
<feature type="binding site" evidence="1">
    <location>
        <position position="261"/>
    </location>
    <ligand>
        <name>Mg(2+)</name>
        <dbReference type="ChEBI" id="CHEBI:18420"/>
        <label>2</label>
    </ligand>
</feature>
<feature type="binding site" evidence="1">
    <location>
        <begin position="305"/>
        <end position="307"/>
    </location>
    <ligand>
        <name>substrate</name>
    </ligand>
</feature>
<feature type="binding site" evidence="1">
    <location>
        <position position="492"/>
    </location>
    <ligand>
        <name>ATP</name>
        <dbReference type="ChEBI" id="CHEBI:30616"/>
    </ligand>
</feature>
<feature type="binding site" evidence="1">
    <location>
        <position position="529"/>
    </location>
    <ligand>
        <name>ATP</name>
        <dbReference type="ChEBI" id="CHEBI:30616"/>
    </ligand>
</feature>
<feature type="binding site" evidence="1">
    <location>
        <position position="530"/>
    </location>
    <ligand>
        <name>Mg(2+)</name>
        <dbReference type="ChEBI" id="CHEBI:18420"/>
        <label>1</label>
    </ligand>
</feature>
<feature type="binding site" evidence="1">
    <location>
        <position position="532"/>
    </location>
    <ligand>
        <name>substrate</name>
    </ligand>
</feature>
<protein>
    <recommendedName>
        <fullName evidence="1">Phosphoribosylformylglycinamidine synthase subunit PurL</fullName>
        <shortName evidence="1">FGAM synthase</shortName>
        <ecNumber evidence="1">6.3.5.3</ecNumber>
    </recommendedName>
    <alternativeName>
        <fullName evidence="1">Formylglycinamide ribonucleotide amidotransferase subunit II</fullName>
        <shortName evidence="1">FGAR amidotransferase II</shortName>
        <shortName evidence="1">FGAR-AT II</shortName>
    </alternativeName>
    <alternativeName>
        <fullName evidence="1">Glutamine amidotransferase PurL</fullName>
    </alternativeName>
    <alternativeName>
        <fullName evidence="1">Phosphoribosylformylglycinamidine synthase subunit II</fullName>
    </alternativeName>
</protein>
<keyword id="KW-0067">ATP-binding</keyword>
<keyword id="KW-0963">Cytoplasm</keyword>
<keyword id="KW-0436">Ligase</keyword>
<keyword id="KW-0460">Magnesium</keyword>
<keyword id="KW-0479">Metal-binding</keyword>
<keyword id="KW-0547">Nucleotide-binding</keyword>
<keyword id="KW-0658">Purine biosynthesis</keyword>
<keyword id="KW-1185">Reference proteome</keyword>
<dbReference type="EC" id="6.3.5.3" evidence="1"/>
<dbReference type="EMBL" id="CP001275">
    <property type="protein sequence ID" value="ACM05316.1"/>
    <property type="molecule type" value="Genomic_DNA"/>
</dbReference>
<dbReference type="RefSeq" id="WP_012642137.1">
    <property type="nucleotide sequence ID" value="NC_011959.1"/>
</dbReference>
<dbReference type="SMR" id="B9KZ38"/>
<dbReference type="STRING" id="309801.trd_0749"/>
<dbReference type="KEGG" id="tro:trd_0749"/>
<dbReference type="eggNOG" id="COG0046">
    <property type="taxonomic scope" value="Bacteria"/>
</dbReference>
<dbReference type="HOGENOM" id="CLU_003100_0_1_0"/>
<dbReference type="OrthoDB" id="9804441at2"/>
<dbReference type="UniPathway" id="UPA00074">
    <property type="reaction ID" value="UER00128"/>
</dbReference>
<dbReference type="Proteomes" id="UP000000447">
    <property type="component" value="Chromosome"/>
</dbReference>
<dbReference type="GO" id="GO:0005737">
    <property type="term" value="C:cytoplasm"/>
    <property type="evidence" value="ECO:0007669"/>
    <property type="project" value="UniProtKB-SubCell"/>
</dbReference>
<dbReference type="GO" id="GO:0005524">
    <property type="term" value="F:ATP binding"/>
    <property type="evidence" value="ECO:0007669"/>
    <property type="project" value="UniProtKB-UniRule"/>
</dbReference>
<dbReference type="GO" id="GO:0000287">
    <property type="term" value="F:magnesium ion binding"/>
    <property type="evidence" value="ECO:0007669"/>
    <property type="project" value="UniProtKB-UniRule"/>
</dbReference>
<dbReference type="GO" id="GO:0004642">
    <property type="term" value="F:phosphoribosylformylglycinamidine synthase activity"/>
    <property type="evidence" value="ECO:0007669"/>
    <property type="project" value="UniProtKB-UniRule"/>
</dbReference>
<dbReference type="GO" id="GO:0006189">
    <property type="term" value="P:'de novo' IMP biosynthetic process"/>
    <property type="evidence" value="ECO:0007669"/>
    <property type="project" value="UniProtKB-UniRule"/>
</dbReference>
<dbReference type="CDD" id="cd02203">
    <property type="entry name" value="PurL_repeat1"/>
    <property type="match status" value="1"/>
</dbReference>
<dbReference type="CDD" id="cd02204">
    <property type="entry name" value="PurL_repeat2"/>
    <property type="match status" value="1"/>
</dbReference>
<dbReference type="FunFam" id="3.30.1330.10:FF:000004">
    <property type="entry name" value="Phosphoribosylformylglycinamidine synthase subunit PurL"/>
    <property type="match status" value="1"/>
</dbReference>
<dbReference type="Gene3D" id="3.90.650.10">
    <property type="entry name" value="PurM-like C-terminal domain"/>
    <property type="match status" value="2"/>
</dbReference>
<dbReference type="Gene3D" id="3.30.1330.10">
    <property type="entry name" value="PurM-like, N-terminal domain"/>
    <property type="match status" value="2"/>
</dbReference>
<dbReference type="HAMAP" id="MF_00420">
    <property type="entry name" value="PurL_2"/>
    <property type="match status" value="1"/>
</dbReference>
<dbReference type="InterPro" id="IPR010074">
    <property type="entry name" value="PRibForGlyAmidine_synth_PurL"/>
</dbReference>
<dbReference type="InterPro" id="IPR041609">
    <property type="entry name" value="PurL_linker"/>
</dbReference>
<dbReference type="InterPro" id="IPR010918">
    <property type="entry name" value="PurM-like_C_dom"/>
</dbReference>
<dbReference type="InterPro" id="IPR036676">
    <property type="entry name" value="PurM-like_C_sf"/>
</dbReference>
<dbReference type="InterPro" id="IPR016188">
    <property type="entry name" value="PurM-like_N"/>
</dbReference>
<dbReference type="InterPro" id="IPR036921">
    <property type="entry name" value="PurM-like_N_sf"/>
</dbReference>
<dbReference type="NCBIfam" id="TIGR01736">
    <property type="entry name" value="FGAM_synth_II"/>
    <property type="match status" value="1"/>
</dbReference>
<dbReference type="NCBIfam" id="NF002290">
    <property type="entry name" value="PRK01213.1"/>
    <property type="match status" value="1"/>
</dbReference>
<dbReference type="PANTHER" id="PTHR43555">
    <property type="entry name" value="PHOSPHORIBOSYLFORMYLGLYCINAMIDINE SYNTHASE SUBUNIT PURL"/>
    <property type="match status" value="1"/>
</dbReference>
<dbReference type="PANTHER" id="PTHR43555:SF1">
    <property type="entry name" value="PHOSPHORIBOSYLFORMYLGLYCINAMIDINE SYNTHASE SUBUNIT PURL"/>
    <property type="match status" value="1"/>
</dbReference>
<dbReference type="Pfam" id="PF00586">
    <property type="entry name" value="AIRS"/>
    <property type="match status" value="2"/>
</dbReference>
<dbReference type="Pfam" id="PF02769">
    <property type="entry name" value="AIRS_C"/>
    <property type="match status" value="2"/>
</dbReference>
<dbReference type="Pfam" id="PF18072">
    <property type="entry name" value="FGAR-AT_linker"/>
    <property type="match status" value="1"/>
</dbReference>
<dbReference type="PIRSF" id="PIRSF001587">
    <property type="entry name" value="FGAM_synthase_II"/>
    <property type="match status" value="1"/>
</dbReference>
<dbReference type="SUPFAM" id="SSF56042">
    <property type="entry name" value="PurM C-terminal domain-like"/>
    <property type="match status" value="2"/>
</dbReference>
<dbReference type="SUPFAM" id="SSF55326">
    <property type="entry name" value="PurM N-terminal domain-like"/>
    <property type="match status" value="2"/>
</dbReference>
<accession>B9KZ38</accession>
<organism>
    <name type="scientific">Thermomicrobium roseum (strain ATCC 27502 / DSM 5159 / P-2)</name>
    <dbReference type="NCBI Taxonomy" id="309801"/>
    <lineage>
        <taxon>Bacteria</taxon>
        <taxon>Pseudomonadati</taxon>
        <taxon>Thermomicrobiota</taxon>
        <taxon>Thermomicrobia</taxon>
        <taxon>Thermomicrobiales</taxon>
        <taxon>Thermomicrobiaceae</taxon>
        <taxon>Thermomicrobium</taxon>
    </lineage>
</organism>
<comment type="function">
    <text evidence="1">Part of the phosphoribosylformylglycinamidine synthase complex involved in the purines biosynthetic pathway. Catalyzes the ATP-dependent conversion of formylglycinamide ribonucleotide (FGAR) and glutamine to yield formylglycinamidine ribonucleotide (FGAM) and glutamate. The FGAM synthase complex is composed of three subunits. PurQ produces an ammonia molecule by converting glutamine to glutamate. PurL transfers the ammonia molecule to FGAR to form FGAM in an ATP-dependent manner. PurS interacts with PurQ and PurL and is thought to assist in the transfer of the ammonia molecule from PurQ to PurL.</text>
</comment>
<comment type="catalytic activity">
    <reaction evidence="1">
        <text>N(2)-formyl-N(1)-(5-phospho-beta-D-ribosyl)glycinamide + L-glutamine + ATP + H2O = 2-formamido-N(1)-(5-O-phospho-beta-D-ribosyl)acetamidine + L-glutamate + ADP + phosphate + H(+)</text>
        <dbReference type="Rhea" id="RHEA:17129"/>
        <dbReference type="ChEBI" id="CHEBI:15377"/>
        <dbReference type="ChEBI" id="CHEBI:15378"/>
        <dbReference type="ChEBI" id="CHEBI:29985"/>
        <dbReference type="ChEBI" id="CHEBI:30616"/>
        <dbReference type="ChEBI" id="CHEBI:43474"/>
        <dbReference type="ChEBI" id="CHEBI:58359"/>
        <dbReference type="ChEBI" id="CHEBI:147286"/>
        <dbReference type="ChEBI" id="CHEBI:147287"/>
        <dbReference type="ChEBI" id="CHEBI:456216"/>
        <dbReference type="EC" id="6.3.5.3"/>
    </reaction>
</comment>
<comment type="pathway">
    <text evidence="1">Purine metabolism; IMP biosynthesis via de novo pathway; 5-amino-1-(5-phospho-D-ribosyl)imidazole from N(2)-formyl-N(1)-(5-phospho-D-ribosyl)glycinamide: step 1/2.</text>
</comment>
<comment type="subunit">
    <text evidence="1">Monomer. Part of the FGAM synthase complex composed of 1 PurL, 1 PurQ and 2 PurS subunits.</text>
</comment>
<comment type="subcellular location">
    <subcellularLocation>
        <location evidence="1">Cytoplasm</location>
    </subcellularLocation>
</comment>
<comment type="similarity">
    <text evidence="1">Belongs to the FGAMS family.</text>
</comment>